<organism>
    <name type="scientific">Mus musculus</name>
    <name type="common">Mouse</name>
    <dbReference type="NCBI Taxonomy" id="10090"/>
    <lineage>
        <taxon>Eukaryota</taxon>
        <taxon>Metazoa</taxon>
        <taxon>Chordata</taxon>
        <taxon>Craniata</taxon>
        <taxon>Vertebrata</taxon>
        <taxon>Euteleostomi</taxon>
        <taxon>Mammalia</taxon>
        <taxon>Eutheria</taxon>
        <taxon>Euarchontoglires</taxon>
        <taxon>Glires</taxon>
        <taxon>Rodentia</taxon>
        <taxon>Myomorpha</taxon>
        <taxon>Muroidea</taxon>
        <taxon>Muridae</taxon>
        <taxon>Murinae</taxon>
        <taxon>Mus</taxon>
        <taxon>Mus</taxon>
    </lineage>
</organism>
<reference key="1">
    <citation type="journal article" date="2005" name="J. Biol. Chem.">
        <title>Human polyserase-2, a novel enzyme with three tandem serine protease domains in a single polypeptide chain.</title>
        <authorList>
            <person name="Cal S."/>
            <person name="Quesada V."/>
            <person name="Llamazares M."/>
            <person name="Diaz-Perales A."/>
            <person name="Garabaya C."/>
            <person name="Lopez-Otin C."/>
        </authorList>
    </citation>
    <scope>NUCLEOTIDE SEQUENCE [MRNA]</scope>
    <source>
        <strain>C57BL/6J</strain>
        <tissue>Liver</tissue>
    </source>
</reference>
<name>POLS2_MOUSE</name>
<evidence type="ECO:0000250" key="1"/>
<evidence type="ECO:0000255" key="2"/>
<evidence type="ECO:0000255" key="3">
    <source>
        <dbReference type="PROSITE-ProRule" id="PRU00274"/>
    </source>
</evidence>
<proteinExistence type="evidence at transcript level"/>
<accession>Q5K2P8</accession>
<protein>
    <recommendedName>
        <fullName>Polyserase-2</fullName>
        <ecNumber>3.4.21.-</ecNumber>
    </recommendedName>
    <alternativeName>
        <fullName>Polyserine protease 2</fullName>
    </alternativeName>
    <alternativeName>
        <fullName>Serine protease 36</fullName>
    </alternativeName>
</protein>
<comment type="function">
    <text evidence="1">Serine protease. Hydrolyzes the peptides N-t-Boc-Gln-Ala-Arg-AMC and N-t-Boc-Gln-Gly-Arg-AMC and, to a lesser extent, N-t-Boc-Ala-Phe-Lys-AMC and N-t-Boc-Val-Leu-Lys-AMC. Has a preference for substrates with an Arg instead of a Lys residue in position P1 (By similarity).</text>
</comment>
<comment type="activity regulation">
    <text>Inhibited by serine proteinase inhibitor 4-(2-aminoethyl)-benzenesulfonyl fluoride, but not with EDTA or E-64.</text>
</comment>
<comment type="subcellular location">
    <subcellularLocation>
        <location evidence="1">Secreted</location>
        <location evidence="1">Extracellular space</location>
        <location evidence="1">Extracellular matrix</location>
    </subcellularLocation>
    <text evidence="1">Not attached to membranes.</text>
</comment>
<comment type="domain">
    <text>The first serine protease domain is catalytically active, whereas the second domain lacks the essential His residue of the catalytic triad at position 363, and the third domain lacks the essential Asp residue of the catalytic triad at position 673. The second and third domains are therefore predicted to be inactive.</text>
</comment>
<comment type="PTM">
    <text evidence="1">The 3 protease domains are not proteolytically cleaved.</text>
</comment>
<comment type="PTM">
    <text evidence="1">N-glycosylated.</text>
</comment>
<comment type="similarity">
    <text evidence="3">Belongs to the peptidase S1 family.</text>
</comment>
<feature type="signal peptide" evidence="2">
    <location>
        <begin position="1"/>
        <end position="19"/>
    </location>
</feature>
<feature type="propeptide" id="PRO_0000027881" evidence="2">
    <location>
        <begin position="20"/>
        <end position="46"/>
    </location>
</feature>
<feature type="chain" id="PRO_0000027882" description="Polyserase-2">
    <location>
        <begin position="47"/>
        <end position="849"/>
    </location>
</feature>
<feature type="domain" description="Peptidase S1 1" evidence="3">
    <location>
        <begin position="47"/>
        <end position="291"/>
    </location>
</feature>
<feature type="domain" description="Peptidase S1 2" evidence="3">
    <location>
        <begin position="323"/>
        <end position="567"/>
    </location>
</feature>
<feature type="domain" description="Peptidase S1 3" evidence="3">
    <location>
        <begin position="584"/>
        <end position="802"/>
    </location>
</feature>
<feature type="active site" description="Charge relay system" evidence="1">
    <location>
        <position position="87"/>
    </location>
</feature>
<feature type="active site" description="Charge relay system" evidence="1">
    <location>
        <position position="139"/>
    </location>
</feature>
<feature type="active site" description="Charge relay system" evidence="1">
    <location>
        <position position="243"/>
    </location>
</feature>
<feature type="glycosylation site" description="N-linked (GlcNAc...) asparagine" evidence="2">
    <location>
        <position position="92"/>
    </location>
</feature>
<feature type="glycosylation site" description="N-linked (GlcNAc...) asparagine" evidence="2">
    <location>
        <position position="130"/>
    </location>
</feature>
<feature type="glycosylation site" description="N-linked (GlcNAc...) asparagine" evidence="2">
    <location>
        <position position="217"/>
    </location>
</feature>
<feature type="glycosylation site" description="N-linked (GlcNAc...) asparagine" evidence="2">
    <location>
        <position position="317"/>
    </location>
</feature>
<feature type="glycosylation site" description="N-linked (GlcNAc...) asparagine" evidence="2">
    <location>
        <position position="396"/>
    </location>
</feature>
<feature type="glycosylation site" description="N-linked (GlcNAc...) asparagine" evidence="2">
    <location>
        <position position="415"/>
    </location>
</feature>
<feature type="disulfide bond" evidence="3">
    <location>
        <begin position="72"/>
        <end position="88"/>
    </location>
</feature>
<feature type="disulfide bond" evidence="3">
    <location>
        <begin position="173"/>
        <end position="249"/>
    </location>
</feature>
<feature type="disulfide bond" evidence="3">
    <location>
        <begin position="206"/>
        <end position="228"/>
    </location>
</feature>
<feature type="disulfide bond" evidence="3">
    <location>
        <begin position="239"/>
        <end position="267"/>
    </location>
</feature>
<feature type="disulfide bond" evidence="3">
    <location>
        <begin position="348"/>
        <end position="364"/>
    </location>
</feature>
<feature type="disulfide bond" evidence="3">
    <location>
        <begin position="438"/>
        <end position="510"/>
    </location>
</feature>
<feature type="disulfide bond" evidence="3">
    <location>
        <begin position="466"/>
        <end position="488"/>
    </location>
</feature>
<feature type="disulfide bond" evidence="3">
    <location>
        <begin position="500"/>
        <end position="528"/>
    </location>
</feature>
<feature type="disulfide bond" evidence="3">
    <location>
        <begin position="609"/>
        <end position="625"/>
    </location>
</feature>
<feature type="disulfide bond" evidence="3">
    <location>
        <begin position="705"/>
        <end position="766"/>
    </location>
</feature>
<feature type="disulfide bond" evidence="3">
    <location>
        <begin position="733"/>
        <end position="745"/>
    </location>
</feature>
<dbReference type="EC" id="3.4.21.-"/>
<dbReference type="EMBL" id="AJ784939">
    <property type="protein sequence ID" value="CAH05010.1"/>
    <property type="molecule type" value="mRNA"/>
</dbReference>
<dbReference type="SMR" id="Q5K2P8"/>
<dbReference type="FunCoup" id="Q5K2P8">
    <property type="interactions" value="330"/>
</dbReference>
<dbReference type="STRING" id="10090.ENSMUSP00000112659"/>
<dbReference type="MEROPS" id="S01.414"/>
<dbReference type="GlyCosmos" id="Q5K2P8">
    <property type="glycosylation" value="6 sites, No reported glycans"/>
</dbReference>
<dbReference type="GlyGen" id="Q5K2P8">
    <property type="glycosylation" value="10 sites"/>
</dbReference>
<dbReference type="jPOST" id="Q5K2P8"/>
<dbReference type="PaxDb" id="10090-ENSMUSP00000091565"/>
<dbReference type="AGR" id="MGI:1924863"/>
<dbReference type="MGI" id="MGI:1924863">
    <property type="gene designation" value="Prss36"/>
</dbReference>
<dbReference type="eggNOG" id="KOG3627">
    <property type="taxonomic scope" value="Eukaryota"/>
</dbReference>
<dbReference type="InParanoid" id="Q5K2P8"/>
<dbReference type="ChiTaRS" id="Prss36">
    <property type="organism name" value="mouse"/>
</dbReference>
<dbReference type="PRO" id="PR:Q5K2P8"/>
<dbReference type="Proteomes" id="UP000000589">
    <property type="component" value="Unplaced"/>
</dbReference>
<dbReference type="RNAct" id="Q5K2P8">
    <property type="molecule type" value="protein"/>
</dbReference>
<dbReference type="GO" id="GO:0005737">
    <property type="term" value="C:cytoplasm"/>
    <property type="evidence" value="ECO:0000266"/>
    <property type="project" value="MGI"/>
</dbReference>
<dbReference type="GO" id="GO:0005576">
    <property type="term" value="C:extracellular region"/>
    <property type="evidence" value="ECO:0007669"/>
    <property type="project" value="UniProtKB-KW"/>
</dbReference>
<dbReference type="GO" id="GO:0004252">
    <property type="term" value="F:serine-type endopeptidase activity"/>
    <property type="evidence" value="ECO:0000266"/>
    <property type="project" value="MGI"/>
</dbReference>
<dbReference type="GO" id="GO:0006508">
    <property type="term" value="P:proteolysis"/>
    <property type="evidence" value="ECO:0000305"/>
    <property type="project" value="MGI"/>
</dbReference>
<dbReference type="CDD" id="cd00190">
    <property type="entry name" value="Tryp_SPc"/>
    <property type="match status" value="1"/>
</dbReference>
<dbReference type="FunFam" id="2.40.10.10:FF:000044">
    <property type="entry name" value="polyserase-2 isoform X1"/>
    <property type="match status" value="2"/>
</dbReference>
<dbReference type="FunFam" id="2.40.10.10:FF:000024">
    <property type="entry name" value="Serine protease 53"/>
    <property type="match status" value="1"/>
</dbReference>
<dbReference type="Gene3D" id="2.40.10.10">
    <property type="entry name" value="Trypsin-like serine proteases"/>
    <property type="match status" value="3"/>
</dbReference>
<dbReference type="InterPro" id="IPR017326">
    <property type="entry name" value="Pept_S1A_polyserase-2"/>
</dbReference>
<dbReference type="InterPro" id="IPR009003">
    <property type="entry name" value="Peptidase_S1_PA"/>
</dbReference>
<dbReference type="InterPro" id="IPR043504">
    <property type="entry name" value="Peptidase_S1_PA_chymotrypsin"/>
</dbReference>
<dbReference type="InterPro" id="IPR001314">
    <property type="entry name" value="Peptidase_S1A"/>
</dbReference>
<dbReference type="InterPro" id="IPR001254">
    <property type="entry name" value="Trypsin_dom"/>
</dbReference>
<dbReference type="InterPro" id="IPR018114">
    <property type="entry name" value="TRYPSIN_HIS"/>
</dbReference>
<dbReference type="InterPro" id="IPR033116">
    <property type="entry name" value="TRYPSIN_SER"/>
</dbReference>
<dbReference type="PANTHER" id="PTHR24253:SF100">
    <property type="entry name" value="POLYSERASE-2"/>
    <property type="match status" value="1"/>
</dbReference>
<dbReference type="PANTHER" id="PTHR24253">
    <property type="entry name" value="TRANSMEMBRANE PROTEASE SERINE"/>
    <property type="match status" value="1"/>
</dbReference>
<dbReference type="Pfam" id="PF00089">
    <property type="entry name" value="Trypsin"/>
    <property type="match status" value="3"/>
</dbReference>
<dbReference type="PIRSF" id="PIRSF037933">
    <property type="entry name" value="Polyserase-2"/>
    <property type="match status" value="1"/>
</dbReference>
<dbReference type="PRINTS" id="PR00722">
    <property type="entry name" value="CHYMOTRYPSIN"/>
</dbReference>
<dbReference type="SMART" id="SM00020">
    <property type="entry name" value="Tryp_SPc"/>
    <property type="match status" value="3"/>
</dbReference>
<dbReference type="SUPFAM" id="SSF50494">
    <property type="entry name" value="Trypsin-like serine proteases"/>
    <property type="match status" value="3"/>
</dbReference>
<dbReference type="PROSITE" id="PS50240">
    <property type="entry name" value="TRYPSIN_DOM"/>
    <property type="match status" value="3"/>
</dbReference>
<dbReference type="PROSITE" id="PS00134">
    <property type="entry name" value="TRYPSIN_HIS"/>
    <property type="match status" value="1"/>
</dbReference>
<dbReference type="PROSITE" id="PS00135">
    <property type="entry name" value="TRYPSIN_SER"/>
    <property type="match status" value="1"/>
</dbReference>
<gene>
    <name type="primary">Prss36</name>
</gene>
<keyword id="KW-1015">Disulfide bond</keyword>
<keyword id="KW-0272">Extracellular matrix</keyword>
<keyword id="KW-0325">Glycoprotein</keyword>
<keyword id="KW-0378">Hydrolase</keyword>
<keyword id="KW-0645">Protease</keyword>
<keyword id="KW-1185">Reference proteome</keyword>
<keyword id="KW-0677">Repeat</keyword>
<keyword id="KW-0964">Secreted</keyword>
<keyword id="KW-0720">Serine protease</keyword>
<keyword id="KW-0732">Signal</keyword>
<keyword id="KW-0865">Zymogen</keyword>
<sequence>MSPHLFLPVVVLVVSPTPGAFQDSAVSPTQGEFEDLDCGRPEPSSRIVGGSDAHPGTWPWQVSLHHGGGHICGGSLIAPSWVLSAAHCFVTNGTLEPADEWSVLLGVHSQDGPLEGAHMRSVATILVPDNYSRVELGADLALLRLASPAKLGPSVKPVCLPRASHLFAHGTACWATGWGDVQESDPLPVPWVLQEVELKLLGETACQCLYSRPGPFNLTLQLLPGMLCAGYPEGRRDTCQGDSGGPLVCEDGGRWFLAGITSFGFGCGRRNRPGVFTAVAHYESWIREHVMGSEPGPAFPSQLQKPPSEPWEPREENCTFAQPECGKATRPGTWPWEAQVMVPGSTPCYGALVSDSWVLAPASCFLDSLHDFETWRVLLPSRPEEKRVVRLVAHENASRNFASDLALLQLRTRVNLTAAPSAVCLPHREHYFLPGSRCRLARWGHGEPAPRSSAQLEAQLLNSWWCHCLYGRQGESVPPPGDPPHLLCPAYQEEEEAGACWVDSGWSLLCREEGTWFLAGYRTLSNGCLRPRAFSPMQTHGLWISHVTQGAYLEDQLTWDWGPEGEETEKQTCPPHTEHGACGLRPQSTPAGVLWPWLTEVHVTGDRVCTGILVAPGWVLAATHCILRLGSSTVPYIDVYLGLAGVSSLPQGHQVSRSVVSIRLPRHSGLRPPLALLELNSRVEPSPSALPICLHPEGVPPGASCWVLGWKDPQNRVPVAAAVSILTPRLCHCLYQGALTPGTFCVFYTEEQEDRCEMTSAPPLLCQTEGGPWVLVGMAVRGSRELFAAIGPEATWISQTVGEAHFLHLGGSSYWSPEGSDPCPQDLAGSASSPKVAALPLLLALLIPR</sequence>